<evidence type="ECO:0000255" key="1">
    <source>
        <dbReference type="HAMAP-Rule" id="MF_00145"/>
    </source>
</evidence>
<proteinExistence type="inferred from homology"/>
<keyword id="KW-0067">ATP-binding</keyword>
<keyword id="KW-0963">Cytoplasm</keyword>
<keyword id="KW-0324">Glycolysis</keyword>
<keyword id="KW-0418">Kinase</keyword>
<keyword id="KW-0547">Nucleotide-binding</keyword>
<keyword id="KW-1185">Reference proteome</keyword>
<keyword id="KW-0808">Transferase</keyword>
<protein>
    <recommendedName>
        <fullName evidence="1">Phosphoglycerate kinase</fullName>
        <ecNumber evidence="1">2.7.2.3</ecNumber>
    </recommendedName>
</protein>
<reference key="1">
    <citation type="submission" date="2008-06" db="EMBL/GenBank/DDBJ databases">
        <title>Complete sequence of Chloroherpeton thalassium ATCC 35110.</title>
        <authorList>
            <consortium name="US DOE Joint Genome Institute"/>
            <person name="Lucas S."/>
            <person name="Copeland A."/>
            <person name="Lapidus A."/>
            <person name="Glavina del Rio T."/>
            <person name="Dalin E."/>
            <person name="Tice H."/>
            <person name="Bruce D."/>
            <person name="Goodwin L."/>
            <person name="Pitluck S."/>
            <person name="Schmutz J."/>
            <person name="Larimer F."/>
            <person name="Land M."/>
            <person name="Hauser L."/>
            <person name="Kyrpides N."/>
            <person name="Mikhailova N."/>
            <person name="Liu Z."/>
            <person name="Li T."/>
            <person name="Zhao F."/>
            <person name="Overmann J."/>
            <person name="Bryant D.A."/>
            <person name="Richardson P."/>
        </authorList>
    </citation>
    <scope>NUCLEOTIDE SEQUENCE [LARGE SCALE GENOMIC DNA]</scope>
    <source>
        <strain>ATCC 35110 / GB-78</strain>
    </source>
</reference>
<name>PGK_CHLT3</name>
<gene>
    <name evidence="1" type="primary">pgk</name>
    <name type="ordered locus">Ctha_0784</name>
</gene>
<organism>
    <name type="scientific">Chloroherpeton thalassium (strain ATCC 35110 / GB-78)</name>
    <dbReference type="NCBI Taxonomy" id="517418"/>
    <lineage>
        <taxon>Bacteria</taxon>
        <taxon>Pseudomonadati</taxon>
        <taxon>Chlorobiota</taxon>
        <taxon>Chlorobiia</taxon>
        <taxon>Chlorobiales</taxon>
        <taxon>Chloroherpetonaceae</taxon>
        <taxon>Chloroherpeton</taxon>
    </lineage>
</organism>
<dbReference type="EC" id="2.7.2.3" evidence="1"/>
<dbReference type="EMBL" id="CP001100">
    <property type="protein sequence ID" value="ACF13252.1"/>
    <property type="molecule type" value="Genomic_DNA"/>
</dbReference>
<dbReference type="RefSeq" id="WP_012499336.1">
    <property type="nucleotide sequence ID" value="NC_011026.1"/>
</dbReference>
<dbReference type="SMR" id="B3QWD9"/>
<dbReference type="STRING" id="517418.Ctha_0784"/>
<dbReference type="KEGG" id="cts:Ctha_0784"/>
<dbReference type="eggNOG" id="COG0126">
    <property type="taxonomic scope" value="Bacteria"/>
</dbReference>
<dbReference type="HOGENOM" id="CLU_025427_0_2_10"/>
<dbReference type="OrthoDB" id="9808460at2"/>
<dbReference type="UniPathway" id="UPA00109">
    <property type="reaction ID" value="UER00185"/>
</dbReference>
<dbReference type="Proteomes" id="UP000001208">
    <property type="component" value="Chromosome"/>
</dbReference>
<dbReference type="GO" id="GO:0005829">
    <property type="term" value="C:cytosol"/>
    <property type="evidence" value="ECO:0007669"/>
    <property type="project" value="TreeGrafter"/>
</dbReference>
<dbReference type="GO" id="GO:0043531">
    <property type="term" value="F:ADP binding"/>
    <property type="evidence" value="ECO:0007669"/>
    <property type="project" value="TreeGrafter"/>
</dbReference>
<dbReference type="GO" id="GO:0005524">
    <property type="term" value="F:ATP binding"/>
    <property type="evidence" value="ECO:0007669"/>
    <property type="project" value="UniProtKB-KW"/>
</dbReference>
<dbReference type="GO" id="GO:0004618">
    <property type="term" value="F:phosphoglycerate kinase activity"/>
    <property type="evidence" value="ECO:0007669"/>
    <property type="project" value="UniProtKB-UniRule"/>
</dbReference>
<dbReference type="GO" id="GO:0006094">
    <property type="term" value="P:gluconeogenesis"/>
    <property type="evidence" value="ECO:0007669"/>
    <property type="project" value="TreeGrafter"/>
</dbReference>
<dbReference type="GO" id="GO:0006096">
    <property type="term" value="P:glycolytic process"/>
    <property type="evidence" value="ECO:0007669"/>
    <property type="project" value="UniProtKB-UniRule"/>
</dbReference>
<dbReference type="CDD" id="cd00318">
    <property type="entry name" value="Phosphoglycerate_kinase"/>
    <property type="match status" value="1"/>
</dbReference>
<dbReference type="FunFam" id="3.40.50.1260:FF:000003">
    <property type="entry name" value="Phosphoglycerate kinase"/>
    <property type="match status" value="1"/>
</dbReference>
<dbReference type="FunFam" id="3.40.50.1260:FF:000006">
    <property type="entry name" value="Phosphoglycerate kinase"/>
    <property type="match status" value="1"/>
</dbReference>
<dbReference type="Gene3D" id="3.40.50.1260">
    <property type="entry name" value="Phosphoglycerate kinase, N-terminal domain"/>
    <property type="match status" value="2"/>
</dbReference>
<dbReference type="HAMAP" id="MF_00145">
    <property type="entry name" value="Phosphoglyc_kinase"/>
    <property type="match status" value="1"/>
</dbReference>
<dbReference type="InterPro" id="IPR001576">
    <property type="entry name" value="Phosphoglycerate_kinase"/>
</dbReference>
<dbReference type="InterPro" id="IPR015911">
    <property type="entry name" value="Phosphoglycerate_kinase_CS"/>
</dbReference>
<dbReference type="InterPro" id="IPR015824">
    <property type="entry name" value="Phosphoglycerate_kinase_N"/>
</dbReference>
<dbReference type="InterPro" id="IPR036043">
    <property type="entry name" value="Phosphoglycerate_kinase_sf"/>
</dbReference>
<dbReference type="PANTHER" id="PTHR11406">
    <property type="entry name" value="PHOSPHOGLYCERATE KINASE"/>
    <property type="match status" value="1"/>
</dbReference>
<dbReference type="PANTHER" id="PTHR11406:SF23">
    <property type="entry name" value="PHOSPHOGLYCERATE KINASE 1, CHLOROPLASTIC-RELATED"/>
    <property type="match status" value="1"/>
</dbReference>
<dbReference type="Pfam" id="PF00162">
    <property type="entry name" value="PGK"/>
    <property type="match status" value="1"/>
</dbReference>
<dbReference type="PIRSF" id="PIRSF000724">
    <property type="entry name" value="Pgk"/>
    <property type="match status" value="1"/>
</dbReference>
<dbReference type="PRINTS" id="PR00477">
    <property type="entry name" value="PHGLYCKINASE"/>
</dbReference>
<dbReference type="SUPFAM" id="SSF53748">
    <property type="entry name" value="Phosphoglycerate kinase"/>
    <property type="match status" value="1"/>
</dbReference>
<dbReference type="PROSITE" id="PS00111">
    <property type="entry name" value="PGLYCERATE_KINASE"/>
    <property type="match status" value="1"/>
</dbReference>
<accession>B3QWD9</accession>
<sequence>MKKKTVDDVSFAGKRVLMRVDFNVPLKDGAVTDDIRIRGALPSIQKVLSDGGCVILMSHLGRPKGKPVAEMSLKPAADRLAELLGKPVQMAPDCIGDEVKNMAAAMKAGDVLMLENLRFHKEEEANDPEFAKSLASLGEVFVNDAFGTAHRAHASTEGVTNYVAESVAGYLIGKELTYLGEATANPVRPFVAILGGAKISGKIDVLENLLGKVDTVLVGGAMVFTFFKAQGYNIGKSLVEDDKLELAKSILEKAKTSGVKFLLPTDVVLADKFDQDANTKIATIDSIEDDWMGLDIGPETANCFREEVVNAKTVIWNGPMGVFEMEKFAKGTMAVAQALADATKQGAITVIGGGDSAAAIAVAGLEDSVTHVSTGGGASLEFLEGKELPGIAALSNA</sequence>
<comment type="catalytic activity">
    <reaction evidence="1">
        <text>(2R)-3-phosphoglycerate + ATP = (2R)-3-phospho-glyceroyl phosphate + ADP</text>
        <dbReference type="Rhea" id="RHEA:14801"/>
        <dbReference type="ChEBI" id="CHEBI:30616"/>
        <dbReference type="ChEBI" id="CHEBI:57604"/>
        <dbReference type="ChEBI" id="CHEBI:58272"/>
        <dbReference type="ChEBI" id="CHEBI:456216"/>
        <dbReference type="EC" id="2.7.2.3"/>
    </reaction>
</comment>
<comment type="pathway">
    <text evidence="1">Carbohydrate degradation; glycolysis; pyruvate from D-glyceraldehyde 3-phosphate: step 2/5.</text>
</comment>
<comment type="subunit">
    <text evidence="1">Monomer.</text>
</comment>
<comment type="subcellular location">
    <subcellularLocation>
        <location evidence="1">Cytoplasm</location>
    </subcellularLocation>
</comment>
<comment type="similarity">
    <text evidence="1">Belongs to the phosphoglycerate kinase family.</text>
</comment>
<feature type="chain" id="PRO_1000096328" description="Phosphoglycerate kinase">
    <location>
        <begin position="1"/>
        <end position="397"/>
    </location>
</feature>
<feature type="binding site" evidence="1">
    <location>
        <begin position="21"/>
        <end position="23"/>
    </location>
    <ligand>
        <name>substrate</name>
    </ligand>
</feature>
<feature type="binding site" evidence="1">
    <location>
        <position position="36"/>
    </location>
    <ligand>
        <name>substrate</name>
    </ligand>
</feature>
<feature type="binding site" evidence="1">
    <location>
        <begin position="59"/>
        <end position="62"/>
    </location>
    <ligand>
        <name>substrate</name>
    </ligand>
</feature>
<feature type="binding site" evidence="1">
    <location>
        <position position="118"/>
    </location>
    <ligand>
        <name>substrate</name>
    </ligand>
</feature>
<feature type="binding site" evidence="1">
    <location>
        <position position="151"/>
    </location>
    <ligand>
        <name>substrate</name>
    </ligand>
</feature>
<feature type="binding site" evidence="1">
    <location>
        <position position="202"/>
    </location>
    <ligand>
        <name>ATP</name>
        <dbReference type="ChEBI" id="CHEBI:30616"/>
    </ligand>
</feature>
<feature type="binding site" evidence="1">
    <location>
        <position position="293"/>
    </location>
    <ligand>
        <name>ATP</name>
        <dbReference type="ChEBI" id="CHEBI:30616"/>
    </ligand>
</feature>
<feature type="binding site" evidence="1">
    <location>
        <position position="324"/>
    </location>
    <ligand>
        <name>ATP</name>
        <dbReference type="ChEBI" id="CHEBI:30616"/>
    </ligand>
</feature>
<feature type="binding site" evidence="1">
    <location>
        <begin position="353"/>
        <end position="356"/>
    </location>
    <ligand>
        <name>ATP</name>
        <dbReference type="ChEBI" id="CHEBI:30616"/>
    </ligand>
</feature>